<name>SLYX_THISH</name>
<reference key="1">
    <citation type="journal article" date="2011" name="Stand. Genomic Sci.">
        <title>Complete genome sequence of 'Thioalkalivibrio sulfidophilus' HL-EbGr7.</title>
        <authorList>
            <person name="Muyzer G."/>
            <person name="Sorokin D.Y."/>
            <person name="Mavromatis K."/>
            <person name="Lapidus A."/>
            <person name="Clum A."/>
            <person name="Ivanova N."/>
            <person name="Pati A."/>
            <person name="d'Haeseleer P."/>
            <person name="Woyke T."/>
            <person name="Kyrpides N.C."/>
        </authorList>
    </citation>
    <scope>NUCLEOTIDE SEQUENCE [LARGE SCALE GENOMIC DNA]</scope>
    <source>
        <strain>HL-EbGR7</strain>
    </source>
</reference>
<keyword id="KW-1185">Reference proteome</keyword>
<comment type="similarity">
    <text evidence="1">Belongs to the SlyX family.</text>
</comment>
<evidence type="ECO:0000255" key="1">
    <source>
        <dbReference type="HAMAP-Rule" id="MF_00715"/>
    </source>
</evidence>
<sequence>MSDALEARVMELEIRLAHQEDLLQSLNQTMIEQQQRIDSLQLQMEGLRQRLAAVIENPLMDPNQEPPPPHY</sequence>
<feature type="chain" id="PRO_1000212684" description="Protein SlyX homolog">
    <location>
        <begin position="1"/>
        <end position="71"/>
    </location>
</feature>
<protein>
    <recommendedName>
        <fullName evidence="1">Protein SlyX homolog</fullName>
    </recommendedName>
</protein>
<dbReference type="EMBL" id="CP001339">
    <property type="protein sequence ID" value="ACL72286.1"/>
    <property type="molecule type" value="Genomic_DNA"/>
</dbReference>
<dbReference type="RefSeq" id="WP_012637769.1">
    <property type="nucleotide sequence ID" value="NC_011901.1"/>
</dbReference>
<dbReference type="SMR" id="B8GQ91"/>
<dbReference type="STRING" id="396588.Tgr7_1200"/>
<dbReference type="KEGG" id="tgr:Tgr7_1200"/>
<dbReference type="eggNOG" id="COG2900">
    <property type="taxonomic scope" value="Bacteria"/>
</dbReference>
<dbReference type="HOGENOM" id="CLU_180796_5_3_6"/>
<dbReference type="OrthoDB" id="5796893at2"/>
<dbReference type="Proteomes" id="UP000002383">
    <property type="component" value="Chromosome"/>
</dbReference>
<dbReference type="Gene3D" id="1.20.5.300">
    <property type="match status" value="1"/>
</dbReference>
<dbReference type="HAMAP" id="MF_00715">
    <property type="entry name" value="SlyX"/>
    <property type="match status" value="1"/>
</dbReference>
<dbReference type="InterPro" id="IPR007236">
    <property type="entry name" value="SlyX"/>
</dbReference>
<dbReference type="PANTHER" id="PTHR36508">
    <property type="entry name" value="PROTEIN SLYX"/>
    <property type="match status" value="1"/>
</dbReference>
<dbReference type="PANTHER" id="PTHR36508:SF1">
    <property type="entry name" value="PROTEIN SLYX"/>
    <property type="match status" value="1"/>
</dbReference>
<dbReference type="Pfam" id="PF04102">
    <property type="entry name" value="SlyX"/>
    <property type="match status" value="1"/>
</dbReference>
<gene>
    <name evidence="1" type="primary">slyX</name>
    <name type="ordered locus">Tgr7_1200</name>
</gene>
<proteinExistence type="inferred from homology"/>
<organism>
    <name type="scientific">Thioalkalivibrio sulfidiphilus (strain HL-EbGR7)</name>
    <dbReference type="NCBI Taxonomy" id="396588"/>
    <lineage>
        <taxon>Bacteria</taxon>
        <taxon>Pseudomonadati</taxon>
        <taxon>Pseudomonadota</taxon>
        <taxon>Gammaproteobacteria</taxon>
        <taxon>Chromatiales</taxon>
        <taxon>Ectothiorhodospiraceae</taxon>
        <taxon>Thioalkalivibrio</taxon>
    </lineage>
</organism>
<accession>B8GQ91</accession>